<proteinExistence type="inferred from homology"/>
<sequence>MNTKISPLIKESLNKELKRQQSHIELIASENYVSKAVLELNGSVLTNKYAEGYPGKRYYGGCEFIDEIESLGIQTAKELFHAEHANIQPHSGSQANDAAYKALLEPKDRVVAMSLDAGGHLTHGYPINFSGYTYDFRFYGVNKDTEQLDYQEIEKIVLEHKPKLIVAGASAYSRIIDFKKFKEIADKVGAYLMVDMAHIAGLVAAGVHPNPLEYADIVTTTTHKTLRGARGGLILCKQEFAKKVDLAVFPGSQGGPLENLIAGKTQALLEASTDEFKEYGKQIVKNTKALANVLQENGLRLVAGGSDNHLINVDVKSTLRITGKKAEKILESIGIICNKNMIPFDTEKPFYTSGIRLGTPAMTTRGFKEEEFKQVGLIIVNALKDPSEENLEKLAKQVTSLCEKFPIYQNIKY</sequence>
<gene>
    <name evidence="1" type="primary">glyA</name>
    <name type="ordered locus">MSC_0894</name>
</gene>
<evidence type="ECO:0000255" key="1">
    <source>
        <dbReference type="HAMAP-Rule" id="MF_00051"/>
    </source>
</evidence>
<keyword id="KW-0028">Amino-acid biosynthesis</keyword>
<keyword id="KW-0963">Cytoplasm</keyword>
<keyword id="KW-0554">One-carbon metabolism</keyword>
<keyword id="KW-0663">Pyridoxal phosphate</keyword>
<keyword id="KW-1185">Reference proteome</keyword>
<keyword id="KW-0808">Transferase</keyword>
<protein>
    <recommendedName>
        <fullName evidence="1">Serine hydroxymethyltransferase</fullName>
        <shortName evidence="1">SHMT</shortName>
        <shortName evidence="1">Serine methylase</shortName>
        <ecNumber evidence="1">2.1.2.1</ecNumber>
    </recommendedName>
</protein>
<dbReference type="EC" id="2.1.2.1" evidence="1"/>
<dbReference type="EMBL" id="BX293980">
    <property type="protein sequence ID" value="CAE77505.1"/>
    <property type="molecule type" value="Genomic_DNA"/>
</dbReference>
<dbReference type="RefSeq" id="NP_975863.1">
    <property type="nucleotide sequence ID" value="NC_005364.2"/>
</dbReference>
<dbReference type="RefSeq" id="WP_011167047.1">
    <property type="nucleotide sequence ID" value="NC_005364.2"/>
</dbReference>
<dbReference type="SMR" id="Q6MS85"/>
<dbReference type="STRING" id="272632.MSC_0894"/>
<dbReference type="KEGG" id="mmy:MSC_0894"/>
<dbReference type="PATRIC" id="fig|272632.4.peg.966"/>
<dbReference type="eggNOG" id="COG0112">
    <property type="taxonomic scope" value="Bacteria"/>
</dbReference>
<dbReference type="HOGENOM" id="CLU_022477_2_1_14"/>
<dbReference type="UniPathway" id="UPA00193"/>
<dbReference type="UniPathway" id="UPA00288">
    <property type="reaction ID" value="UER01023"/>
</dbReference>
<dbReference type="Proteomes" id="UP000001016">
    <property type="component" value="Chromosome"/>
</dbReference>
<dbReference type="GO" id="GO:0005829">
    <property type="term" value="C:cytosol"/>
    <property type="evidence" value="ECO:0007669"/>
    <property type="project" value="TreeGrafter"/>
</dbReference>
<dbReference type="GO" id="GO:0004372">
    <property type="term" value="F:glycine hydroxymethyltransferase activity"/>
    <property type="evidence" value="ECO:0007669"/>
    <property type="project" value="UniProtKB-UniRule"/>
</dbReference>
<dbReference type="GO" id="GO:0030170">
    <property type="term" value="F:pyridoxal phosphate binding"/>
    <property type="evidence" value="ECO:0007669"/>
    <property type="project" value="UniProtKB-UniRule"/>
</dbReference>
<dbReference type="GO" id="GO:0019264">
    <property type="term" value="P:glycine biosynthetic process from serine"/>
    <property type="evidence" value="ECO:0007669"/>
    <property type="project" value="UniProtKB-UniRule"/>
</dbReference>
<dbReference type="GO" id="GO:0035999">
    <property type="term" value="P:tetrahydrofolate interconversion"/>
    <property type="evidence" value="ECO:0007669"/>
    <property type="project" value="UniProtKB-UniRule"/>
</dbReference>
<dbReference type="CDD" id="cd00378">
    <property type="entry name" value="SHMT"/>
    <property type="match status" value="1"/>
</dbReference>
<dbReference type="FunFam" id="3.40.640.10:FF:000001">
    <property type="entry name" value="Serine hydroxymethyltransferase"/>
    <property type="match status" value="1"/>
</dbReference>
<dbReference type="Gene3D" id="3.90.1150.10">
    <property type="entry name" value="Aspartate Aminotransferase, domain 1"/>
    <property type="match status" value="1"/>
</dbReference>
<dbReference type="Gene3D" id="3.40.640.10">
    <property type="entry name" value="Type I PLP-dependent aspartate aminotransferase-like (Major domain)"/>
    <property type="match status" value="1"/>
</dbReference>
<dbReference type="HAMAP" id="MF_00051">
    <property type="entry name" value="SHMT"/>
    <property type="match status" value="1"/>
</dbReference>
<dbReference type="InterPro" id="IPR015424">
    <property type="entry name" value="PyrdxlP-dep_Trfase"/>
</dbReference>
<dbReference type="InterPro" id="IPR015421">
    <property type="entry name" value="PyrdxlP-dep_Trfase_major"/>
</dbReference>
<dbReference type="InterPro" id="IPR015422">
    <property type="entry name" value="PyrdxlP-dep_Trfase_small"/>
</dbReference>
<dbReference type="InterPro" id="IPR001085">
    <property type="entry name" value="Ser_HO-MeTrfase"/>
</dbReference>
<dbReference type="InterPro" id="IPR049943">
    <property type="entry name" value="Ser_HO-MeTrfase-like"/>
</dbReference>
<dbReference type="InterPro" id="IPR019798">
    <property type="entry name" value="Ser_HO-MeTrfase_PLP_BS"/>
</dbReference>
<dbReference type="InterPro" id="IPR039429">
    <property type="entry name" value="SHMT-like_dom"/>
</dbReference>
<dbReference type="NCBIfam" id="NF000586">
    <property type="entry name" value="PRK00011.1"/>
    <property type="match status" value="1"/>
</dbReference>
<dbReference type="PANTHER" id="PTHR11680">
    <property type="entry name" value="SERINE HYDROXYMETHYLTRANSFERASE"/>
    <property type="match status" value="1"/>
</dbReference>
<dbReference type="PANTHER" id="PTHR11680:SF35">
    <property type="entry name" value="SERINE HYDROXYMETHYLTRANSFERASE 1"/>
    <property type="match status" value="1"/>
</dbReference>
<dbReference type="Pfam" id="PF00464">
    <property type="entry name" value="SHMT"/>
    <property type="match status" value="1"/>
</dbReference>
<dbReference type="PIRSF" id="PIRSF000412">
    <property type="entry name" value="SHMT"/>
    <property type="match status" value="1"/>
</dbReference>
<dbReference type="SUPFAM" id="SSF53383">
    <property type="entry name" value="PLP-dependent transferases"/>
    <property type="match status" value="1"/>
</dbReference>
<dbReference type="PROSITE" id="PS00096">
    <property type="entry name" value="SHMT"/>
    <property type="match status" value="1"/>
</dbReference>
<accession>Q6MS85</accession>
<comment type="function">
    <text evidence="1">Catalyzes the reversible interconversion of serine and glycine with tetrahydrofolate (THF) serving as the one-carbon carrier. This reaction serves as the major source of one-carbon groups required for the biosynthesis of purines, thymidylate, methionine, and other important biomolecules. Also exhibits THF-independent aldolase activity toward beta-hydroxyamino acids, producing glycine and aldehydes, via a retro-aldol mechanism.</text>
</comment>
<comment type="catalytic activity">
    <reaction evidence="1">
        <text>(6R)-5,10-methylene-5,6,7,8-tetrahydrofolate + glycine + H2O = (6S)-5,6,7,8-tetrahydrofolate + L-serine</text>
        <dbReference type="Rhea" id="RHEA:15481"/>
        <dbReference type="ChEBI" id="CHEBI:15377"/>
        <dbReference type="ChEBI" id="CHEBI:15636"/>
        <dbReference type="ChEBI" id="CHEBI:33384"/>
        <dbReference type="ChEBI" id="CHEBI:57305"/>
        <dbReference type="ChEBI" id="CHEBI:57453"/>
        <dbReference type="EC" id="2.1.2.1"/>
    </reaction>
</comment>
<comment type="cofactor">
    <cofactor evidence="1">
        <name>pyridoxal 5'-phosphate</name>
        <dbReference type="ChEBI" id="CHEBI:597326"/>
    </cofactor>
</comment>
<comment type="pathway">
    <text evidence="1">One-carbon metabolism; tetrahydrofolate interconversion.</text>
</comment>
<comment type="pathway">
    <text evidence="1">Amino-acid biosynthesis; glycine biosynthesis; glycine from L-serine: step 1/1.</text>
</comment>
<comment type="subunit">
    <text evidence="1">Homodimer.</text>
</comment>
<comment type="subcellular location">
    <subcellularLocation>
        <location evidence="1">Cytoplasm</location>
    </subcellularLocation>
</comment>
<comment type="similarity">
    <text evidence="1">Belongs to the SHMT family.</text>
</comment>
<feature type="chain" id="PRO_0000113613" description="Serine hydroxymethyltransferase">
    <location>
        <begin position="1"/>
        <end position="413"/>
    </location>
</feature>
<feature type="binding site" evidence="1">
    <location>
        <position position="115"/>
    </location>
    <ligand>
        <name>(6S)-5,6,7,8-tetrahydrofolate</name>
        <dbReference type="ChEBI" id="CHEBI:57453"/>
    </ligand>
</feature>
<feature type="binding site" evidence="1">
    <location>
        <begin position="119"/>
        <end position="121"/>
    </location>
    <ligand>
        <name>(6S)-5,6,7,8-tetrahydrofolate</name>
        <dbReference type="ChEBI" id="CHEBI:57453"/>
    </ligand>
</feature>
<feature type="site" description="Plays an important role in substrate specificity" evidence="1">
    <location>
        <position position="223"/>
    </location>
</feature>
<feature type="modified residue" description="N6-(pyridoxal phosphate)lysine" evidence="1">
    <location>
        <position position="224"/>
    </location>
</feature>
<organism>
    <name type="scientific">Mycoplasma mycoides subsp. mycoides SC (strain CCUG 32753 / NCTC 10114 / PG1)</name>
    <dbReference type="NCBI Taxonomy" id="272632"/>
    <lineage>
        <taxon>Bacteria</taxon>
        <taxon>Bacillati</taxon>
        <taxon>Mycoplasmatota</taxon>
        <taxon>Mollicutes</taxon>
        <taxon>Mycoplasmataceae</taxon>
        <taxon>Mycoplasma</taxon>
    </lineage>
</organism>
<name>GLYA_MYCMS</name>
<reference key="1">
    <citation type="journal article" date="2004" name="Genome Res.">
        <title>The genome sequence of Mycoplasma mycoides subsp. mycoides SC type strain PG1T, the causative agent of contagious bovine pleuropneumonia (CBPP).</title>
        <authorList>
            <person name="Westberg J."/>
            <person name="Persson A."/>
            <person name="Holmberg A."/>
            <person name="Goesmann A."/>
            <person name="Lundeberg J."/>
            <person name="Johansson K.-E."/>
            <person name="Pettersson B."/>
            <person name="Uhlen M."/>
        </authorList>
    </citation>
    <scope>NUCLEOTIDE SEQUENCE [LARGE SCALE GENOMIC DNA]</scope>
    <source>
        <strain>CCUG 32753 / NCTC 10114 / PG1</strain>
    </source>
</reference>